<proteinExistence type="inferred from homology"/>
<accession>Q8HVR6</accession>
<feature type="chain" id="PRO_0000250797" description="NAD(P)H-quinone oxidoreductase subunit I, chloroplastic">
    <location>
        <begin position="1"/>
        <end position="166"/>
    </location>
</feature>
<feature type="domain" description="4Fe-4S ferredoxin-type 1" evidence="1">
    <location>
        <begin position="55"/>
        <end position="84"/>
    </location>
</feature>
<feature type="domain" description="4Fe-4S ferredoxin-type 2" evidence="1">
    <location>
        <begin position="95"/>
        <end position="124"/>
    </location>
</feature>
<feature type="binding site" evidence="1">
    <location>
        <position position="64"/>
    </location>
    <ligand>
        <name>[4Fe-4S] cluster</name>
        <dbReference type="ChEBI" id="CHEBI:49883"/>
        <label>1</label>
    </ligand>
</feature>
<feature type="binding site" evidence="1">
    <location>
        <position position="67"/>
    </location>
    <ligand>
        <name>[4Fe-4S] cluster</name>
        <dbReference type="ChEBI" id="CHEBI:49883"/>
        <label>1</label>
    </ligand>
</feature>
<feature type="binding site" evidence="1">
    <location>
        <position position="70"/>
    </location>
    <ligand>
        <name>[4Fe-4S] cluster</name>
        <dbReference type="ChEBI" id="CHEBI:49883"/>
        <label>1</label>
    </ligand>
</feature>
<feature type="binding site" evidence="1">
    <location>
        <position position="74"/>
    </location>
    <ligand>
        <name>[4Fe-4S] cluster</name>
        <dbReference type="ChEBI" id="CHEBI:49883"/>
        <label>2</label>
    </ligand>
</feature>
<feature type="binding site" evidence="1">
    <location>
        <position position="104"/>
    </location>
    <ligand>
        <name>[4Fe-4S] cluster</name>
        <dbReference type="ChEBI" id="CHEBI:49883"/>
        <label>2</label>
    </ligand>
</feature>
<feature type="binding site" evidence="1">
    <location>
        <position position="107"/>
    </location>
    <ligand>
        <name>[4Fe-4S] cluster</name>
        <dbReference type="ChEBI" id="CHEBI:49883"/>
        <label>2</label>
    </ligand>
</feature>
<feature type="binding site" evidence="1">
    <location>
        <position position="110"/>
    </location>
    <ligand>
        <name>[4Fe-4S] cluster</name>
        <dbReference type="ChEBI" id="CHEBI:49883"/>
        <label>2</label>
    </ligand>
</feature>
<feature type="binding site" evidence="1">
    <location>
        <position position="114"/>
    </location>
    <ligand>
        <name>[4Fe-4S] cluster</name>
        <dbReference type="ChEBI" id="CHEBI:49883"/>
        <label>1</label>
    </ligand>
</feature>
<comment type="function">
    <text evidence="1">NDH shuttles electrons from NAD(P)H:plastoquinone, via FMN and iron-sulfur (Fe-S) centers, to quinones in the photosynthetic chain and possibly in a chloroplast respiratory chain. The immediate electron acceptor for the enzyme in this species is believed to be plastoquinone. Couples the redox reaction to proton translocation, and thus conserves the redox energy in a proton gradient.</text>
</comment>
<comment type="catalytic activity">
    <reaction evidence="1">
        <text>a plastoquinone + NADH + (n+1) H(+)(in) = a plastoquinol + NAD(+) + n H(+)(out)</text>
        <dbReference type="Rhea" id="RHEA:42608"/>
        <dbReference type="Rhea" id="RHEA-COMP:9561"/>
        <dbReference type="Rhea" id="RHEA-COMP:9562"/>
        <dbReference type="ChEBI" id="CHEBI:15378"/>
        <dbReference type="ChEBI" id="CHEBI:17757"/>
        <dbReference type="ChEBI" id="CHEBI:57540"/>
        <dbReference type="ChEBI" id="CHEBI:57945"/>
        <dbReference type="ChEBI" id="CHEBI:62192"/>
    </reaction>
</comment>
<comment type="catalytic activity">
    <reaction evidence="1">
        <text>a plastoquinone + NADPH + (n+1) H(+)(in) = a plastoquinol + NADP(+) + n H(+)(out)</text>
        <dbReference type="Rhea" id="RHEA:42612"/>
        <dbReference type="Rhea" id="RHEA-COMP:9561"/>
        <dbReference type="Rhea" id="RHEA-COMP:9562"/>
        <dbReference type="ChEBI" id="CHEBI:15378"/>
        <dbReference type="ChEBI" id="CHEBI:17757"/>
        <dbReference type="ChEBI" id="CHEBI:57783"/>
        <dbReference type="ChEBI" id="CHEBI:58349"/>
        <dbReference type="ChEBI" id="CHEBI:62192"/>
    </reaction>
</comment>
<comment type="cofactor">
    <cofactor evidence="1">
        <name>[4Fe-4S] cluster</name>
        <dbReference type="ChEBI" id="CHEBI:49883"/>
    </cofactor>
    <text evidence="1">Binds 2 [4Fe-4S] clusters per subunit.</text>
</comment>
<comment type="subunit">
    <text evidence="1">NDH is composed of at least 16 different subunits, 5 of which are encoded in the nucleus.</text>
</comment>
<comment type="subcellular location">
    <subcellularLocation>
        <location evidence="1">Plastid</location>
        <location evidence="1">Chloroplast thylakoid membrane</location>
        <topology evidence="1">Peripheral membrane protein</topology>
    </subcellularLocation>
</comment>
<comment type="similarity">
    <text evidence="1">Belongs to the complex I 23 kDa subunit family.</text>
</comment>
<evidence type="ECO:0000255" key="1">
    <source>
        <dbReference type="HAMAP-Rule" id="MF_01351"/>
    </source>
</evidence>
<protein>
    <recommendedName>
        <fullName evidence="1">NAD(P)H-quinone oxidoreductase subunit I, chloroplastic</fullName>
        <ecNumber evidence="1">7.1.1.-</ecNumber>
    </recommendedName>
    <alternativeName>
        <fullName evidence="1">NAD(P)H dehydrogenase subunit I</fullName>
        <shortName evidence="1">NDH subunit I</shortName>
    </alternativeName>
    <alternativeName>
        <fullName evidence="1">NADH-plastoquinone oxidoreductase subunit I</fullName>
    </alternativeName>
</protein>
<name>NDHI_HOFFA</name>
<geneLocation type="chloroplast"/>
<keyword id="KW-0004">4Fe-4S</keyword>
<keyword id="KW-0150">Chloroplast</keyword>
<keyword id="KW-0408">Iron</keyword>
<keyword id="KW-0411">Iron-sulfur</keyword>
<keyword id="KW-0472">Membrane</keyword>
<keyword id="KW-0479">Metal-binding</keyword>
<keyword id="KW-0520">NAD</keyword>
<keyword id="KW-0521">NADP</keyword>
<keyword id="KW-0934">Plastid</keyword>
<keyword id="KW-0618">Plastoquinone</keyword>
<keyword id="KW-0874">Quinone</keyword>
<keyword id="KW-0677">Repeat</keyword>
<keyword id="KW-0793">Thylakoid</keyword>
<keyword id="KW-1278">Translocase</keyword>
<sequence>MFPMVTEFMNYGQQTVRAARYIGQGFIITLSHANRLPVTIQYPYEKLITSERFRGRIHFEFDKCIACEVCVRVCPIDLPVVDWKLETDIRKKRLLNYSIDFGICIFCGNCVEYCPTNCLSMTEEYELSTYHRHELNYNQIALGRLPMSIIDDYTIRTILNLPEIKT</sequence>
<reference key="1">
    <citation type="submission" date="2003-01" db="EMBL/GenBank/DDBJ databases">
        <title>Chloroplast DNA phylogeny of tribe Heliantheae (Asteraceae).</title>
        <authorList>
            <person name="Panero J.L."/>
            <person name="Baldwin B.G."/>
            <person name="Schilling E.E."/>
            <person name="Clevinger J.A."/>
        </authorList>
    </citation>
    <scope>NUCLEOTIDE SEQUENCE [GENOMIC DNA]</scope>
</reference>
<dbReference type="EC" id="7.1.1.-" evidence="1"/>
<dbReference type="EMBL" id="AF383797">
    <property type="protein sequence ID" value="AAN61738.1"/>
    <property type="molecule type" value="Genomic_DNA"/>
</dbReference>
<dbReference type="SMR" id="Q8HVR6"/>
<dbReference type="GO" id="GO:0009535">
    <property type="term" value="C:chloroplast thylakoid membrane"/>
    <property type="evidence" value="ECO:0007669"/>
    <property type="project" value="UniProtKB-SubCell"/>
</dbReference>
<dbReference type="GO" id="GO:0051539">
    <property type="term" value="F:4 iron, 4 sulfur cluster binding"/>
    <property type="evidence" value="ECO:0007669"/>
    <property type="project" value="UniProtKB-KW"/>
</dbReference>
<dbReference type="GO" id="GO:0005506">
    <property type="term" value="F:iron ion binding"/>
    <property type="evidence" value="ECO:0007669"/>
    <property type="project" value="UniProtKB-UniRule"/>
</dbReference>
<dbReference type="GO" id="GO:0008137">
    <property type="term" value="F:NADH dehydrogenase (ubiquinone) activity"/>
    <property type="evidence" value="ECO:0007669"/>
    <property type="project" value="InterPro"/>
</dbReference>
<dbReference type="GO" id="GO:0048038">
    <property type="term" value="F:quinone binding"/>
    <property type="evidence" value="ECO:0007669"/>
    <property type="project" value="UniProtKB-KW"/>
</dbReference>
<dbReference type="GO" id="GO:0019684">
    <property type="term" value="P:photosynthesis, light reaction"/>
    <property type="evidence" value="ECO:0007669"/>
    <property type="project" value="UniProtKB-UniRule"/>
</dbReference>
<dbReference type="FunFam" id="3.30.70.3270:FF:000006">
    <property type="entry name" value="NAD(P)H-quinone oxidoreductase subunit I, chloroplastic"/>
    <property type="match status" value="1"/>
</dbReference>
<dbReference type="Gene3D" id="3.30.70.3270">
    <property type="match status" value="1"/>
</dbReference>
<dbReference type="HAMAP" id="MF_01351">
    <property type="entry name" value="NDH1_NuoI"/>
    <property type="match status" value="1"/>
</dbReference>
<dbReference type="InterPro" id="IPR017896">
    <property type="entry name" value="4Fe4S_Fe-S-bd"/>
</dbReference>
<dbReference type="InterPro" id="IPR017900">
    <property type="entry name" value="4Fe4S_Fe_S_CS"/>
</dbReference>
<dbReference type="InterPro" id="IPR010226">
    <property type="entry name" value="NADH_quinone_OxRdtase_chainI"/>
</dbReference>
<dbReference type="InterPro" id="IPR004497">
    <property type="entry name" value="NDHI"/>
</dbReference>
<dbReference type="NCBIfam" id="TIGR00403">
    <property type="entry name" value="ndhI"/>
    <property type="match status" value="1"/>
</dbReference>
<dbReference type="NCBIfam" id="TIGR01971">
    <property type="entry name" value="NuoI"/>
    <property type="match status" value="1"/>
</dbReference>
<dbReference type="NCBIfam" id="NF004537">
    <property type="entry name" value="PRK05888.1-3"/>
    <property type="match status" value="1"/>
</dbReference>
<dbReference type="PANTHER" id="PTHR47275">
    <property type="entry name" value="NAD(P)H-QUINONE OXIDOREDUCTASE SUBUNIT I, CHLOROPLASTIC"/>
    <property type="match status" value="1"/>
</dbReference>
<dbReference type="PANTHER" id="PTHR47275:SF1">
    <property type="entry name" value="NAD(P)H-QUINONE OXIDOREDUCTASE SUBUNIT I, CHLOROPLASTIC"/>
    <property type="match status" value="1"/>
</dbReference>
<dbReference type="Pfam" id="PF00037">
    <property type="entry name" value="Fer4"/>
    <property type="match status" value="2"/>
</dbReference>
<dbReference type="SUPFAM" id="SSF54862">
    <property type="entry name" value="4Fe-4S ferredoxins"/>
    <property type="match status" value="1"/>
</dbReference>
<dbReference type="PROSITE" id="PS00198">
    <property type="entry name" value="4FE4S_FER_1"/>
    <property type="match status" value="2"/>
</dbReference>
<dbReference type="PROSITE" id="PS51379">
    <property type="entry name" value="4FE4S_FER_2"/>
    <property type="match status" value="2"/>
</dbReference>
<organism>
    <name type="scientific">Hofmeisteria fasciculata</name>
    <name type="common">Helogyne fasciculata</name>
    <dbReference type="NCBI Taxonomy" id="217844"/>
    <lineage>
        <taxon>Eukaryota</taxon>
        <taxon>Viridiplantae</taxon>
        <taxon>Streptophyta</taxon>
        <taxon>Embryophyta</taxon>
        <taxon>Tracheophyta</taxon>
        <taxon>Spermatophyta</taxon>
        <taxon>Magnoliopsida</taxon>
        <taxon>eudicotyledons</taxon>
        <taxon>Gunneridae</taxon>
        <taxon>Pentapetalae</taxon>
        <taxon>asterids</taxon>
        <taxon>campanulids</taxon>
        <taxon>Asterales</taxon>
        <taxon>Asteraceae</taxon>
        <taxon>Asteroideae</taxon>
        <taxon>Heliantheae alliance</taxon>
        <taxon>Eupatorieae</taxon>
        <taxon>Hofmeisteria</taxon>
    </lineage>
</organism>
<gene>
    <name evidence="1" type="primary">ndhI</name>
</gene>